<reference key="1">
    <citation type="journal article" date="1997" name="J. Bacteriol.">
        <title>Complete genome sequence of Methanobacterium thermoautotrophicum deltaH: functional analysis and comparative genomics.</title>
        <authorList>
            <person name="Smith D.R."/>
            <person name="Doucette-Stamm L.A."/>
            <person name="Deloughery C."/>
            <person name="Lee H.-M."/>
            <person name="Dubois J."/>
            <person name="Aldredge T."/>
            <person name="Bashirzadeh R."/>
            <person name="Blakely D."/>
            <person name="Cook R."/>
            <person name="Gilbert K."/>
            <person name="Harrison D."/>
            <person name="Hoang L."/>
            <person name="Keagle P."/>
            <person name="Lumm W."/>
            <person name="Pothier B."/>
            <person name="Qiu D."/>
            <person name="Spadafora R."/>
            <person name="Vicare R."/>
            <person name="Wang Y."/>
            <person name="Wierzbowski J."/>
            <person name="Gibson R."/>
            <person name="Jiwani N."/>
            <person name="Caruso A."/>
            <person name="Bush D."/>
            <person name="Safer H."/>
            <person name="Patwell D."/>
            <person name="Prabhakar S."/>
            <person name="McDougall S."/>
            <person name="Shimer G."/>
            <person name="Goyal A."/>
            <person name="Pietrovski S."/>
            <person name="Church G.M."/>
            <person name="Daniels C.J."/>
            <person name="Mao J.-I."/>
            <person name="Rice P."/>
            <person name="Noelling J."/>
            <person name="Reeve J.N."/>
        </authorList>
    </citation>
    <scope>NUCLEOTIDE SEQUENCE [LARGE SCALE GENOMIC DNA]</scope>
    <source>
        <strain>ATCC 29096 / DSM 1053 / JCM 10044 / NBRC 100330 / Delta H</strain>
    </source>
</reference>
<dbReference type="EMBL" id="AE000666">
    <property type="protein sequence ID" value="AAB84523.1"/>
    <property type="molecule type" value="Genomic_DNA"/>
</dbReference>
<dbReference type="PIR" id="B69138">
    <property type="entry name" value="B69138"/>
</dbReference>
<dbReference type="RefSeq" id="WP_010875645.1">
    <property type="nucleotide sequence ID" value="NC_000916.1"/>
</dbReference>
<dbReference type="SMR" id="O26111"/>
<dbReference type="FunCoup" id="O26111">
    <property type="interactions" value="166"/>
</dbReference>
<dbReference type="STRING" id="187420.MTH_3"/>
<dbReference type="PaxDb" id="187420-MTH_3"/>
<dbReference type="EnsemblBacteria" id="AAB84523">
    <property type="protein sequence ID" value="AAB84523"/>
    <property type="gene ID" value="MTH_3"/>
</dbReference>
<dbReference type="GeneID" id="1469965"/>
<dbReference type="KEGG" id="mth:MTH_3"/>
<dbReference type="PATRIC" id="fig|187420.15.peg.3"/>
<dbReference type="HOGENOM" id="CLU_026535_0_0_2"/>
<dbReference type="InParanoid" id="O26111"/>
<dbReference type="Proteomes" id="UP000005223">
    <property type="component" value="Chromosome"/>
</dbReference>
<dbReference type="GO" id="GO:1990904">
    <property type="term" value="C:ribonucleoprotein complex"/>
    <property type="evidence" value="ECO:0007669"/>
    <property type="project" value="UniProtKB-KW"/>
</dbReference>
<dbReference type="GO" id="GO:0005840">
    <property type="term" value="C:ribosome"/>
    <property type="evidence" value="ECO:0007669"/>
    <property type="project" value="UniProtKB-KW"/>
</dbReference>
<dbReference type="GO" id="GO:0019843">
    <property type="term" value="F:rRNA binding"/>
    <property type="evidence" value="ECO:0007669"/>
    <property type="project" value="UniProtKB-UniRule"/>
</dbReference>
<dbReference type="GO" id="GO:0003735">
    <property type="term" value="F:structural constituent of ribosome"/>
    <property type="evidence" value="ECO:0007669"/>
    <property type="project" value="InterPro"/>
</dbReference>
<dbReference type="GO" id="GO:0006412">
    <property type="term" value="P:translation"/>
    <property type="evidence" value="ECO:0007669"/>
    <property type="project" value="UniProtKB-UniRule"/>
</dbReference>
<dbReference type="FunFam" id="3.40.1370.10:FF:000011">
    <property type="entry name" value="50S ribosomal protein L4"/>
    <property type="match status" value="1"/>
</dbReference>
<dbReference type="Gene3D" id="3.40.1370.10">
    <property type="match status" value="1"/>
</dbReference>
<dbReference type="HAMAP" id="MF_01328_A">
    <property type="entry name" value="Ribosomal_uL4_A"/>
    <property type="match status" value="1"/>
</dbReference>
<dbReference type="InterPro" id="IPR002136">
    <property type="entry name" value="Ribosomal_uL4"/>
</dbReference>
<dbReference type="InterPro" id="IPR023574">
    <property type="entry name" value="Ribosomal_uL4_dom_sf"/>
</dbReference>
<dbReference type="InterPro" id="IPR013000">
    <property type="entry name" value="Ribosomal_uL4_euk/arc_CS"/>
</dbReference>
<dbReference type="InterPro" id="IPR045240">
    <property type="entry name" value="Ribosomal_uL4_euk/arch"/>
</dbReference>
<dbReference type="InterPro" id="IPR019970">
    <property type="entry name" value="Ribosomall_uL4-arc"/>
</dbReference>
<dbReference type="NCBIfam" id="TIGR03672">
    <property type="entry name" value="rpl4p_arch"/>
    <property type="match status" value="1"/>
</dbReference>
<dbReference type="PANTHER" id="PTHR19431">
    <property type="entry name" value="60S RIBOSOMAL PROTEIN L4"/>
    <property type="match status" value="1"/>
</dbReference>
<dbReference type="Pfam" id="PF00573">
    <property type="entry name" value="Ribosomal_L4"/>
    <property type="match status" value="1"/>
</dbReference>
<dbReference type="SUPFAM" id="SSF52166">
    <property type="entry name" value="Ribosomal protein L4"/>
    <property type="match status" value="1"/>
</dbReference>
<dbReference type="PROSITE" id="PS00939">
    <property type="entry name" value="RIBOSOMAL_L1E"/>
    <property type="match status" value="1"/>
</dbReference>
<gene>
    <name evidence="1" type="primary">rpl4</name>
    <name type="ordered locus">MTH_3</name>
</gene>
<keyword id="KW-1185">Reference proteome</keyword>
<keyword id="KW-0687">Ribonucleoprotein</keyword>
<keyword id="KW-0689">Ribosomal protein</keyword>
<keyword id="KW-0694">RNA-binding</keyword>
<keyword id="KW-0699">rRNA-binding</keyword>
<organism>
    <name type="scientific">Methanothermobacter thermautotrophicus (strain ATCC 29096 / DSM 1053 / JCM 10044 / NBRC 100330 / Delta H)</name>
    <name type="common">Methanobacterium thermoautotrophicum</name>
    <dbReference type="NCBI Taxonomy" id="187420"/>
    <lineage>
        <taxon>Archaea</taxon>
        <taxon>Methanobacteriati</taxon>
        <taxon>Methanobacteriota</taxon>
        <taxon>Methanomada group</taxon>
        <taxon>Methanobacteria</taxon>
        <taxon>Methanobacteriales</taxon>
        <taxon>Methanobacteriaceae</taxon>
        <taxon>Methanothermobacter</taxon>
    </lineage>
</organism>
<comment type="function">
    <text evidence="1">One of the primary rRNA binding proteins, this protein initially binds near the 5'-end of the 23S rRNA. It is important during the early stages of 50S assembly. It makes multiple contacts with different domains of the 23S rRNA in the assembled 50S subunit and ribosome.</text>
</comment>
<comment type="function">
    <text evidence="1">Forms part of the polypeptide exit tunnel.</text>
</comment>
<comment type="subunit">
    <text evidence="1">Part of the 50S ribosomal subunit.</text>
</comment>
<comment type="similarity">
    <text evidence="1">Belongs to the universal ribosomal protein uL4 family.</text>
</comment>
<accession>O26111</accession>
<sequence>MKIKVYSLEGEAIDEMELPEIFNEEFRPDVIKRAVLSAQTARVQPWGPDPMAGKRTSAQSYGAGRGVAMVPRIKNGSRAAFVPQAVGGRRAHPPRPQKNYHERINRKERRLAIRSAVAATARKDLVEARGHRIENVPQLPLVVDDELSMIKRTADTREVFRKLGIMDDIVRAREGKKIRAGKGKMRGRKYRTPRGPLIVVGDDKGITRGARNHPGVDVVRVENLNAELLAPGTHPGRLTVFTRSAIEKLDELFQ</sequence>
<feature type="chain" id="PRO_0000129336" description="Large ribosomal subunit protein uL4">
    <location>
        <begin position="1"/>
        <end position="254"/>
    </location>
</feature>
<name>RL4_METTH</name>
<proteinExistence type="inferred from homology"/>
<evidence type="ECO:0000255" key="1">
    <source>
        <dbReference type="HAMAP-Rule" id="MF_01328"/>
    </source>
</evidence>
<evidence type="ECO:0000305" key="2"/>
<protein>
    <recommendedName>
        <fullName evidence="1">Large ribosomal subunit protein uL4</fullName>
    </recommendedName>
    <alternativeName>
        <fullName evidence="2">50S ribosomal protein L4</fullName>
    </alternativeName>
</protein>